<protein>
    <recommendedName>
        <fullName>H-2 class I histocompatibility antigen, L-D alpha chain</fullName>
    </recommendedName>
</protein>
<feature type="signal peptide">
    <location>
        <begin position="1"/>
        <end position="24"/>
    </location>
</feature>
<feature type="chain" id="PRO_0000018932" description="H-2 class I histocompatibility antigen, L-D alpha chain">
    <location>
        <begin position="25"/>
        <end position="362"/>
    </location>
</feature>
<feature type="topological domain" description="Extracellular" evidence="2">
    <location>
        <begin position="25"/>
        <end position="309"/>
    </location>
</feature>
<feature type="transmembrane region" description="Helical" evidence="2">
    <location>
        <begin position="310"/>
        <end position="331"/>
    </location>
</feature>
<feature type="topological domain" description="Cytoplasmic" evidence="2">
    <location>
        <begin position="332"/>
        <end position="362"/>
    </location>
</feature>
<feature type="domain" description="Ig-like C1-type">
    <location>
        <begin position="209"/>
        <end position="297"/>
    </location>
</feature>
<feature type="region of interest" description="Alpha-1">
    <location>
        <begin position="25"/>
        <end position="114"/>
    </location>
</feature>
<feature type="region of interest" description="Alpha-2">
    <location>
        <begin position="115"/>
        <end position="206"/>
    </location>
</feature>
<feature type="region of interest" description="Alpha-3">
    <location>
        <begin position="207"/>
        <end position="298"/>
    </location>
</feature>
<feature type="region of interest" description="Connecting peptide">
    <location>
        <begin position="299"/>
        <end position="309"/>
    </location>
</feature>
<feature type="region of interest" description="Disordered" evidence="3">
    <location>
        <begin position="340"/>
        <end position="362"/>
    </location>
</feature>
<feature type="modified residue" description="Phosphoserine" evidence="1">
    <location>
        <position position="353"/>
    </location>
</feature>
<feature type="modified residue" description="Phosphoserine" evidence="1">
    <location>
        <position position="356"/>
    </location>
</feature>
<feature type="glycosylation site" description="N-linked (GlcNAc...) asparagine">
    <location>
        <position position="110"/>
    </location>
</feature>
<feature type="glycosylation site" description="N-linked (GlcNAc...) asparagine">
    <location>
        <position position="200"/>
    </location>
</feature>
<feature type="glycosylation site" description="N-linked (GlcNAc...) asparagine" evidence="4">
    <location>
        <position position="280"/>
    </location>
</feature>
<feature type="disulfide bond">
    <location>
        <begin position="125"/>
        <end position="188"/>
    </location>
</feature>
<feature type="disulfide bond">
    <location>
        <begin position="227"/>
        <end position="283"/>
    </location>
</feature>
<feature type="sequence conflict" description="In Ref. 2, 3 and 4." evidence="4" ref="2 3 4">
    <original>LAPTQTRA</original>
    <variation>WPDSDPR</variation>
    <location>
        <begin position="17"/>
        <end position="24"/>
    </location>
</feature>
<feature type="sequence conflict" description="In Ref. 2 and 3." evidence="4" ref="2 3">
    <location>
        <position position="35"/>
    </location>
</feature>
<feature type="sequence conflict" description="In Ref. 2, 3 and 4." evidence="4" ref="2 3 4">
    <original>C</original>
    <variation>R</variation>
    <location>
        <position position="145"/>
    </location>
</feature>
<feature type="sequence conflict" description="In Ref. 5." evidence="4" ref="5">
    <original>K</original>
    <variation>E</variation>
    <location>
        <position position="220"/>
    </location>
</feature>
<feature type="sequence conflict" description="In Ref. 4; CAA24129/AAA39661." evidence="4" ref="4">
    <original>E</original>
    <variation>H</variation>
    <location>
        <position position="292"/>
    </location>
</feature>
<feature type="sequence conflict" description="In Ref. 5." evidence="4" ref="5">
    <original>S</original>
    <variation>F</variation>
    <location>
        <position position="303"/>
    </location>
</feature>
<feature type="strand" evidence="9">
    <location>
        <begin position="27"/>
        <end position="38"/>
    </location>
</feature>
<feature type="turn" evidence="11">
    <location>
        <begin position="39"/>
        <end position="41"/>
    </location>
</feature>
<feature type="strand" evidence="9">
    <location>
        <begin position="45"/>
        <end position="52"/>
    </location>
</feature>
<feature type="strand" evidence="9">
    <location>
        <begin position="55"/>
        <end position="61"/>
    </location>
</feature>
<feature type="strand" evidence="9">
    <location>
        <begin position="64"/>
        <end position="66"/>
    </location>
</feature>
<feature type="strand" evidence="9">
    <location>
        <begin position="70"/>
        <end position="73"/>
    </location>
</feature>
<feature type="turn" evidence="8">
    <location>
        <begin position="74"/>
        <end position="76"/>
    </location>
</feature>
<feature type="helix" evidence="9">
    <location>
        <begin position="81"/>
        <end position="108"/>
    </location>
</feature>
<feature type="strand" evidence="7">
    <location>
        <begin position="113"/>
        <end position="115"/>
    </location>
</feature>
<feature type="strand" evidence="9">
    <location>
        <begin position="117"/>
        <end position="127"/>
    </location>
</feature>
<feature type="strand" evidence="9">
    <location>
        <begin position="131"/>
        <end position="142"/>
    </location>
</feature>
<feature type="strand" evidence="9">
    <location>
        <begin position="145"/>
        <end position="150"/>
    </location>
</feature>
<feature type="turn" evidence="5">
    <location>
        <begin position="152"/>
        <end position="155"/>
    </location>
</feature>
<feature type="strand" evidence="9">
    <location>
        <begin position="157"/>
        <end position="159"/>
    </location>
</feature>
<feature type="helix" evidence="9">
    <location>
        <begin position="162"/>
        <end position="174"/>
    </location>
</feature>
<feature type="helix" evidence="9">
    <location>
        <begin position="176"/>
        <end position="185"/>
    </location>
</feature>
<feature type="helix" evidence="9">
    <location>
        <begin position="187"/>
        <end position="198"/>
    </location>
</feature>
<feature type="helix" evidence="11">
    <location>
        <begin position="200"/>
        <end position="203"/>
    </location>
</feature>
<feature type="strand" evidence="11">
    <location>
        <begin position="210"/>
        <end position="217"/>
    </location>
</feature>
<feature type="turn" evidence="5">
    <location>
        <begin position="219"/>
        <end position="221"/>
    </location>
</feature>
<feature type="strand" evidence="11">
    <location>
        <begin position="223"/>
        <end position="235"/>
    </location>
</feature>
<feature type="strand" evidence="11">
    <location>
        <begin position="238"/>
        <end position="243"/>
    </location>
</feature>
<feature type="strand" evidence="10">
    <location>
        <begin position="246"/>
        <end position="248"/>
    </location>
</feature>
<feature type="turn" evidence="6">
    <location>
        <begin position="249"/>
        <end position="251"/>
    </location>
</feature>
<feature type="strand" evidence="11">
    <location>
        <begin position="261"/>
        <end position="263"/>
    </location>
</feature>
<feature type="strand" evidence="11">
    <location>
        <begin position="265"/>
        <end position="273"/>
    </location>
</feature>
<feature type="turn" evidence="6">
    <location>
        <begin position="275"/>
        <end position="277"/>
    </location>
</feature>
<feature type="helix" evidence="11">
    <location>
        <begin position="278"/>
        <end position="280"/>
    </location>
</feature>
<feature type="strand" evidence="11">
    <location>
        <begin position="282"/>
        <end position="286"/>
    </location>
</feature>
<feature type="strand" evidence="5">
    <location>
        <begin position="288"/>
        <end position="290"/>
    </location>
</feature>
<feature type="strand" evidence="11">
    <location>
        <begin position="294"/>
        <end position="296"/>
    </location>
</feature>
<evidence type="ECO:0000250" key="1">
    <source>
        <dbReference type="UniProtKB" id="P01900"/>
    </source>
</evidence>
<evidence type="ECO:0000255" key="2"/>
<evidence type="ECO:0000256" key="3">
    <source>
        <dbReference type="SAM" id="MobiDB-lite"/>
    </source>
</evidence>
<evidence type="ECO:0000305" key="4"/>
<evidence type="ECO:0007829" key="5">
    <source>
        <dbReference type="PDB" id="1LD9"/>
    </source>
</evidence>
<evidence type="ECO:0007829" key="6">
    <source>
        <dbReference type="PDB" id="1LDP"/>
    </source>
</evidence>
<evidence type="ECO:0007829" key="7">
    <source>
        <dbReference type="PDB" id="3ERY"/>
    </source>
</evidence>
<evidence type="ECO:0007829" key="8">
    <source>
        <dbReference type="PDB" id="3V4U"/>
    </source>
</evidence>
<evidence type="ECO:0007829" key="9">
    <source>
        <dbReference type="PDB" id="6L9K"/>
    </source>
</evidence>
<evidence type="ECO:0007829" key="10">
    <source>
        <dbReference type="PDB" id="6L9M"/>
    </source>
</evidence>
<evidence type="ECO:0007829" key="11">
    <source>
        <dbReference type="PDB" id="8D5N"/>
    </source>
</evidence>
<gene>
    <name type="primary">H2-L</name>
</gene>
<proteinExistence type="evidence at protein level"/>
<dbReference type="EMBL" id="M33151">
    <property type="protein sequence ID" value="AAA39659.1"/>
    <property type="molecule type" value="mRNA"/>
</dbReference>
<dbReference type="EMBL" id="V00749">
    <property type="protein sequence ID" value="CAA24126.1"/>
    <property type="status" value="ALT_INIT"/>
    <property type="molecule type" value="Genomic_DNA"/>
</dbReference>
<dbReference type="EMBL" id="V00750">
    <property type="protein sequence ID" value="CAA24127.1"/>
    <property type="molecule type" value="Genomic_DNA"/>
</dbReference>
<dbReference type="EMBL" id="V00751">
    <property type="protein sequence ID" value="CAA24128.1"/>
    <property type="molecule type" value="Genomic_DNA"/>
</dbReference>
<dbReference type="EMBL" id="V00752">
    <property type="protein sequence ID" value="CAA24129.1"/>
    <property type="status" value="ALT_SEQ"/>
    <property type="molecule type" value="Genomic_DNA"/>
</dbReference>
<dbReference type="EMBL" id="L00129">
    <property type="protein sequence ID" value="AAA39662.1"/>
    <property type="molecule type" value="Genomic_DNA"/>
</dbReference>
<dbReference type="EMBL" id="J00394">
    <property type="protein sequence ID" value="AAA39578.1"/>
    <property type="molecule type" value="mRNA"/>
</dbReference>
<dbReference type="EMBL" id="L00128">
    <property type="protein sequence ID" value="AAA39661.1"/>
    <property type="molecule type" value="Genomic_DNA"/>
</dbReference>
<dbReference type="EMBL" id="L00127">
    <property type="protein sequence ID" value="AAA39661.1"/>
    <property type="status" value="JOINED"/>
    <property type="molecule type" value="Genomic_DNA"/>
</dbReference>
<dbReference type="PIR" id="B60854">
    <property type="entry name" value="B60854"/>
</dbReference>
<dbReference type="PIR" id="C60854">
    <property type="entry name" value="C60854"/>
</dbReference>
<dbReference type="PIR" id="I54069">
    <property type="entry name" value="HLMSLD"/>
</dbReference>
<dbReference type="PDB" id="1LD9">
    <property type="method" value="X-ray"/>
    <property type="resolution" value="2.40 A"/>
    <property type="chains" value="A/D=25-292"/>
</dbReference>
<dbReference type="PDB" id="1LDP">
    <property type="method" value="X-ray"/>
    <property type="resolution" value="3.10 A"/>
    <property type="chains" value="H=25-296"/>
</dbReference>
<dbReference type="PDB" id="2E7L">
    <property type="method" value="X-ray"/>
    <property type="resolution" value="2.50 A"/>
    <property type="chains" value="E/F=25-205"/>
</dbReference>
<dbReference type="PDB" id="2OI9">
    <property type="method" value="X-ray"/>
    <property type="resolution" value="2.35 A"/>
    <property type="chains" value="A=25-203"/>
</dbReference>
<dbReference type="PDB" id="3E2H">
    <property type="method" value="X-ray"/>
    <property type="resolution" value="3.80 A"/>
    <property type="chains" value="A=25-199"/>
</dbReference>
<dbReference type="PDB" id="3E3Q">
    <property type="method" value="X-ray"/>
    <property type="resolution" value="2.95 A"/>
    <property type="chains" value="A/B/H/L/P/U/Y/c=25-199"/>
</dbReference>
<dbReference type="PDB" id="3ERY">
    <property type="method" value="X-ray"/>
    <property type="resolution" value="1.95 A"/>
    <property type="chains" value="A/B=25-198"/>
</dbReference>
<dbReference type="PDB" id="3TF7">
    <property type="method" value="X-ray"/>
    <property type="resolution" value="2.75 A"/>
    <property type="chains" value="A/E=25-203"/>
</dbReference>
<dbReference type="PDB" id="3TFK">
    <property type="method" value="X-ray"/>
    <property type="resolution" value="2.75 A"/>
    <property type="chains" value="A=25-203"/>
</dbReference>
<dbReference type="PDB" id="3TJH">
    <property type="method" value="X-ray"/>
    <property type="resolution" value="2.12 A"/>
    <property type="chains" value="A=25-203"/>
</dbReference>
<dbReference type="PDB" id="3TPU">
    <property type="method" value="X-ray"/>
    <property type="resolution" value="3.10 A"/>
    <property type="chains" value="E/I/K/Q=25-203"/>
</dbReference>
<dbReference type="PDB" id="3UO1">
    <property type="method" value="X-ray"/>
    <property type="resolution" value="1.64 A"/>
    <property type="chains" value="P=70-78"/>
</dbReference>
<dbReference type="PDB" id="3UYR">
    <property type="method" value="X-ray"/>
    <property type="resolution" value="1.70 A"/>
    <property type="chains" value="P=70-77"/>
</dbReference>
<dbReference type="PDB" id="3V4U">
    <property type="method" value="X-ray"/>
    <property type="resolution" value="1.64 A"/>
    <property type="chains" value="P=70-78"/>
</dbReference>
<dbReference type="PDB" id="3V52">
    <property type="method" value="X-ray"/>
    <property type="resolution" value="1.70 A"/>
    <property type="chains" value="P=70-77"/>
</dbReference>
<dbReference type="PDB" id="3VJ6">
    <property type="method" value="X-ray"/>
    <property type="resolution" value="1.90 A"/>
    <property type="chains" value="P=3-11"/>
</dbReference>
<dbReference type="PDB" id="4MS8">
    <property type="method" value="X-ray"/>
    <property type="resolution" value="1.92 A"/>
    <property type="chains" value="A=25-203"/>
</dbReference>
<dbReference type="PDB" id="4MVB">
    <property type="method" value="X-ray"/>
    <property type="resolution" value="3.09 A"/>
    <property type="chains" value="C=25-203"/>
</dbReference>
<dbReference type="PDB" id="4MXQ">
    <property type="method" value="X-ray"/>
    <property type="resolution" value="2.60 A"/>
    <property type="chains" value="A=25-203"/>
</dbReference>
<dbReference type="PDB" id="4N0C">
    <property type="method" value="X-ray"/>
    <property type="resolution" value="2.90 A"/>
    <property type="chains" value="A/E=25-203"/>
</dbReference>
<dbReference type="PDB" id="4N5E">
    <property type="method" value="X-ray"/>
    <property type="resolution" value="3.06 A"/>
    <property type="chains" value="A=25-203"/>
</dbReference>
<dbReference type="PDB" id="4NHU">
    <property type="method" value="X-ray"/>
    <property type="resolution" value="2.90 A"/>
    <property type="chains" value="E/G=25-204"/>
</dbReference>
<dbReference type="PDB" id="5VCL">
    <property type="method" value="X-ray"/>
    <property type="resolution" value="2.05 A"/>
    <property type="chains" value="P=3-11"/>
</dbReference>
<dbReference type="PDB" id="6L9K">
    <property type="method" value="X-ray"/>
    <property type="resolution" value="1.80 A"/>
    <property type="chains" value="A=25-199"/>
</dbReference>
<dbReference type="PDB" id="6L9L">
    <property type="method" value="X-ray"/>
    <property type="resolution" value="2.40 A"/>
    <property type="chains" value="A/E=25-199"/>
</dbReference>
<dbReference type="PDB" id="6L9M">
    <property type="method" value="X-ray"/>
    <property type="resolution" value="2.60 A"/>
    <property type="chains" value="A/D/G/J=24-301"/>
</dbReference>
<dbReference type="PDB" id="6L9N">
    <property type="method" value="X-ray"/>
    <property type="resolution" value="2.60 A"/>
    <property type="chains" value="A/D/G/J=24-301"/>
</dbReference>
<dbReference type="PDB" id="8D5N">
    <property type="method" value="X-ray"/>
    <property type="resolution" value="1.80 A"/>
    <property type="chains" value="A/C=25-298"/>
</dbReference>
<dbReference type="PDB" id="8D5Q">
    <property type="method" value="X-ray"/>
    <property type="resolution" value="2.50 A"/>
    <property type="chains" value="C=25-203"/>
</dbReference>
<dbReference type="PDB" id="8UMO">
    <property type="method" value="X-ray"/>
    <property type="resolution" value="2.60 A"/>
    <property type="chains" value="P=3-11"/>
</dbReference>
<dbReference type="PDBsum" id="1LD9"/>
<dbReference type="PDBsum" id="1LDP"/>
<dbReference type="PDBsum" id="2E7L"/>
<dbReference type="PDBsum" id="2OI9"/>
<dbReference type="PDBsum" id="3E2H"/>
<dbReference type="PDBsum" id="3E3Q"/>
<dbReference type="PDBsum" id="3ERY"/>
<dbReference type="PDBsum" id="3TF7"/>
<dbReference type="PDBsum" id="3TFK"/>
<dbReference type="PDBsum" id="3TJH"/>
<dbReference type="PDBsum" id="3TPU"/>
<dbReference type="PDBsum" id="3UO1"/>
<dbReference type="PDBsum" id="3UYR"/>
<dbReference type="PDBsum" id="3V4U"/>
<dbReference type="PDBsum" id="3V52"/>
<dbReference type="PDBsum" id="3VJ6"/>
<dbReference type="PDBsum" id="4MS8"/>
<dbReference type="PDBsum" id="4MVB"/>
<dbReference type="PDBsum" id="4MXQ"/>
<dbReference type="PDBsum" id="4N0C"/>
<dbReference type="PDBsum" id="4N5E"/>
<dbReference type="PDBsum" id="4NHU"/>
<dbReference type="PDBsum" id="5VCL"/>
<dbReference type="PDBsum" id="6L9K"/>
<dbReference type="PDBsum" id="6L9L"/>
<dbReference type="PDBsum" id="6L9M"/>
<dbReference type="PDBsum" id="6L9N"/>
<dbReference type="PDBsum" id="8D5N"/>
<dbReference type="PDBsum" id="8D5Q"/>
<dbReference type="PDBsum" id="8UMO"/>
<dbReference type="SMR" id="P01897"/>
<dbReference type="FunCoup" id="P01897">
    <property type="interactions" value="192"/>
</dbReference>
<dbReference type="IntAct" id="P01897">
    <property type="interactions" value="1"/>
</dbReference>
<dbReference type="MINT" id="P01897"/>
<dbReference type="GlyCosmos" id="P01897">
    <property type="glycosylation" value="3 sites, No reported glycans"/>
</dbReference>
<dbReference type="GlyGen" id="P01897">
    <property type="glycosylation" value="3 sites"/>
</dbReference>
<dbReference type="iPTMnet" id="P01897"/>
<dbReference type="PhosphoSitePlus" id="P01897"/>
<dbReference type="SwissPalm" id="P01897"/>
<dbReference type="jPOST" id="P01897"/>
<dbReference type="PeptideAtlas" id="P01897"/>
<dbReference type="ProteomicsDB" id="271382"/>
<dbReference type="Pumba" id="P01897"/>
<dbReference type="ABCD" id="P01897">
    <property type="antibodies" value="2 sequenced antibodies"/>
</dbReference>
<dbReference type="AGR" id="MGI:95912"/>
<dbReference type="MGI" id="MGI:95912">
    <property type="gene designation" value="H2-L"/>
</dbReference>
<dbReference type="InParanoid" id="P01897"/>
<dbReference type="EvolutionaryTrace" id="P01897"/>
<dbReference type="Proteomes" id="UP000000589">
    <property type="component" value="Unplaced"/>
</dbReference>
<dbReference type="RNAct" id="P01897">
    <property type="molecule type" value="protein"/>
</dbReference>
<dbReference type="GO" id="GO:0098553">
    <property type="term" value="C:lumenal side of endoplasmic reticulum membrane"/>
    <property type="evidence" value="ECO:0000304"/>
    <property type="project" value="Reactome"/>
</dbReference>
<dbReference type="GO" id="GO:0042612">
    <property type="term" value="C:MHC class I protein complex"/>
    <property type="evidence" value="ECO:0007669"/>
    <property type="project" value="UniProtKB-KW"/>
</dbReference>
<dbReference type="GO" id="GO:0030670">
    <property type="term" value="C:phagocytic vesicle membrane"/>
    <property type="evidence" value="ECO:0000304"/>
    <property type="project" value="Reactome"/>
</dbReference>
<dbReference type="GO" id="GO:0002474">
    <property type="term" value="P:antigen processing and presentation of peptide antigen via MHC class I"/>
    <property type="evidence" value="ECO:0007669"/>
    <property type="project" value="UniProtKB-KW"/>
</dbReference>
<dbReference type="GO" id="GO:0006952">
    <property type="term" value="P:defense response"/>
    <property type="evidence" value="ECO:0000304"/>
    <property type="project" value="MGI"/>
</dbReference>
<dbReference type="GO" id="GO:0006955">
    <property type="term" value="P:immune response"/>
    <property type="evidence" value="ECO:0007669"/>
    <property type="project" value="InterPro"/>
</dbReference>
<dbReference type="CDD" id="cd21018">
    <property type="entry name" value="IgC1_MHC_Ia_H2Db_H2Ld"/>
    <property type="match status" value="1"/>
</dbReference>
<dbReference type="CDD" id="cd12087">
    <property type="entry name" value="TM_EGFR-like"/>
    <property type="match status" value="1"/>
</dbReference>
<dbReference type="FunFam" id="2.60.40.10:FF:000014">
    <property type="entry name" value="H-2 class I histocompatibility antigen, alpha chain"/>
    <property type="match status" value="1"/>
</dbReference>
<dbReference type="FunFam" id="3.30.500.10:FF:000001">
    <property type="entry name" value="H-2 class I histocompatibility antigen, alpha chain"/>
    <property type="match status" value="1"/>
</dbReference>
<dbReference type="Gene3D" id="2.60.40.10">
    <property type="entry name" value="Immunoglobulins"/>
    <property type="match status" value="1"/>
</dbReference>
<dbReference type="Gene3D" id="3.30.500.10">
    <property type="entry name" value="MHC class I-like antigen recognition-like"/>
    <property type="match status" value="1"/>
</dbReference>
<dbReference type="InterPro" id="IPR007110">
    <property type="entry name" value="Ig-like_dom"/>
</dbReference>
<dbReference type="InterPro" id="IPR036179">
    <property type="entry name" value="Ig-like_dom_sf"/>
</dbReference>
<dbReference type="InterPro" id="IPR013783">
    <property type="entry name" value="Ig-like_fold"/>
</dbReference>
<dbReference type="InterPro" id="IPR003006">
    <property type="entry name" value="Ig/MHC_CS"/>
</dbReference>
<dbReference type="InterPro" id="IPR003597">
    <property type="entry name" value="Ig_C1-set"/>
</dbReference>
<dbReference type="InterPro" id="IPR050208">
    <property type="entry name" value="MHC_class-I_related"/>
</dbReference>
<dbReference type="InterPro" id="IPR011161">
    <property type="entry name" value="MHC_I-like_Ag-recog"/>
</dbReference>
<dbReference type="InterPro" id="IPR037055">
    <property type="entry name" value="MHC_I-like_Ag-recog_sf"/>
</dbReference>
<dbReference type="InterPro" id="IPR011162">
    <property type="entry name" value="MHC_I/II-like_Ag-recog"/>
</dbReference>
<dbReference type="InterPro" id="IPR001039">
    <property type="entry name" value="MHC_I_a_a1/a2"/>
</dbReference>
<dbReference type="InterPro" id="IPR010579">
    <property type="entry name" value="MHC_I_a_C"/>
</dbReference>
<dbReference type="PANTHER" id="PTHR16675:SF251">
    <property type="entry name" value="HLA CLASS I HISTOCOMPATIBILITY ANTIGEN, C ALPHA CHAIN"/>
    <property type="match status" value="1"/>
</dbReference>
<dbReference type="PANTHER" id="PTHR16675">
    <property type="entry name" value="MHC CLASS I-RELATED"/>
    <property type="match status" value="1"/>
</dbReference>
<dbReference type="Pfam" id="PF07654">
    <property type="entry name" value="C1-set"/>
    <property type="match status" value="1"/>
</dbReference>
<dbReference type="Pfam" id="PF00129">
    <property type="entry name" value="MHC_I"/>
    <property type="match status" value="1"/>
</dbReference>
<dbReference type="Pfam" id="PF06623">
    <property type="entry name" value="MHC_I_C"/>
    <property type="match status" value="1"/>
</dbReference>
<dbReference type="PRINTS" id="PR01638">
    <property type="entry name" value="MHCCLASSI"/>
</dbReference>
<dbReference type="SMART" id="SM00407">
    <property type="entry name" value="IGc1"/>
    <property type="match status" value="1"/>
</dbReference>
<dbReference type="SUPFAM" id="SSF48726">
    <property type="entry name" value="Immunoglobulin"/>
    <property type="match status" value="1"/>
</dbReference>
<dbReference type="SUPFAM" id="SSF54452">
    <property type="entry name" value="MHC antigen-recognition domain"/>
    <property type="match status" value="1"/>
</dbReference>
<dbReference type="PROSITE" id="PS50835">
    <property type="entry name" value="IG_LIKE"/>
    <property type="match status" value="1"/>
</dbReference>
<dbReference type="PROSITE" id="PS00290">
    <property type="entry name" value="IG_MHC"/>
    <property type="match status" value="1"/>
</dbReference>
<sequence length="362" mass="40711">MGAMAPRTLLLLLAAALAPTQTRAGPHSMRYFETAVSRPGLGEPRYISVGYVDNKEFVRFDSDAENPRYEPQAPWMEQEGPEYWERITQIAKGQEQWFRVNLRTLLGYYNQSAGGTHTLQWMYGCDVGSDGRLLRGYEQFAYDGCDYIALNEDLKTWTAADMAAQITRRKWEQAGAAEYYRAYLEGECVEWLHRYLKNGNATLLRTDSPKAHVTHHPRSKGEVTLRCWALGFYPADITLTWQLNGEELTQDMELVETRPAGDGTFQKWASVVVPLGKEQNYTCRVYHEGLPEPLTLRWEPPPSTDSYMVIVAVLGVLGAMAIIGAVVAFVMKRRRNTGGKGGDYALAPGSQSSEMSLRDCKA</sequence>
<comment type="function">
    <text>Involved in the presentation of foreign antigens to the immune system.</text>
</comment>
<comment type="subunit">
    <text>Heterodimer of an alpha chain and a beta chain (beta-2-microglobulin).</text>
</comment>
<comment type="subcellular location">
    <subcellularLocation>
        <location>Membrane</location>
        <topology>Single-pass type I membrane protein</topology>
    </subcellularLocation>
</comment>
<comment type="similarity">
    <text evidence="4">Belongs to the MHC class I family.</text>
</comment>
<comment type="sequence caution" evidence="4">
    <conflict type="erroneous initiation">
        <sequence resource="EMBL-CDS" id="CAA24126"/>
    </conflict>
</comment>
<keyword id="KW-0002">3D-structure</keyword>
<keyword id="KW-1015">Disulfide bond</keyword>
<keyword id="KW-0325">Glycoprotein</keyword>
<keyword id="KW-0391">Immunity</keyword>
<keyword id="KW-0472">Membrane</keyword>
<keyword id="KW-0490">MHC I</keyword>
<keyword id="KW-0597">Phosphoprotein</keyword>
<keyword id="KW-1185">Reference proteome</keyword>
<keyword id="KW-0732">Signal</keyword>
<keyword id="KW-0812">Transmembrane</keyword>
<keyword id="KW-1133">Transmembrane helix</keyword>
<accession>P01897</accession>
<accession>Q31195</accession>
<accession>Q31196</accession>
<accession>Q31197</accession>
<reference key="1">
    <citation type="journal article" date="1991" name="Gene">
        <title>Generation of a functional cDNA encoding the LdH2 class-I molecule by using a single-LTR retroviral shuttle vector.</title>
        <authorList>
            <person name="Joly E."/>
            <person name="Oldstone M.B."/>
        </authorList>
    </citation>
    <scope>NUCLEOTIDE SEQUENCE [MRNA]</scope>
</reference>
<reference key="2">
    <citation type="journal article" date="1982" name="Science">
        <title>DNA sequence of a gene encoding a BALB/c mouse Ld transplantation antigen.</title>
        <authorList>
            <person name="Moore K.W."/>
            <person name="Sher B.T."/>
            <person name="Sun Y.H."/>
            <person name="Eakle K.A."/>
            <person name="Hood L.E."/>
        </authorList>
    </citation>
    <scope>NUCLEOTIDE SEQUENCE (CLONE 27.5)</scope>
    <source>
        <strain>BALB/cJ</strain>
        <tissue>Sperm</tissue>
    </source>
</reference>
<reference key="3">
    <citation type="journal article" date="1983" name="Cell">
        <title>Expression and function of transplantation antigens with altered or deleted cytoplasmic domains.</title>
        <authorList>
            <person name="Zuniga M.C."/>
            <person name="Malissen B."/>
            <person name="McMillan M."/>
            <person name="Brayton P.R."/>
            <person name="Clark S.S."/>
            <person name="Forman J."/>
            <person name="Hood L.E."/>
        </authorList>
    </citation>
    <scope>NUCLEOTIDE SEQUENCE</scope>
    <source>
        <strain>BALB/cJ</strain>
        <tissue>Sperm</tissue>
    </source>
</reference>
<reference key="4">
    <citation type="journal article" date="1982" name="Proc. Natl. Acad. Sci. U.S.A.">
        <title>Structure and expression of a mouse major histocompatibility antigen gene, H-2Ld.</title>
        <authorList>
            <person name="Evans G.A."/>
            <person name="Margulies D.H."/>
            <person name="Camerini-Otero R.D."/>
            <person name="Ozato K."/>
            <person name="Seidman J.G."/>
        </authorList>
    </citation>
    <scope>NUCLEOTIDE SEQUENCE [GENOMIC DNA] OF 1-311 AND 339-348</scope>
</reference>
<reference key="5">
    <citation type="journal article" date="1981" name="Nature">
        <title>Structure of C-terminal half of two H-2 antigens from cloned mRNA.</title>
        <authorList>
            <person name="Bregegere F."/>
            <person name="Abastado J.P."/>
            <person name="Kvist S."/>
            <person name="Rask L."/>
            <person name="Lalanne J.-L."/>
            <person name="Garoff H."/>
            <person name="Cami B."/>
            <person name="Wiman K.G."/>
            <person name="Larhammar D."/>
            <person name="Peterson P.A."/>
            <person name="Gachelin G."/>
            <person name="Kourilsky P."/>
            <person name="Dobberstein B."/>
        </authorList>
    </citation>
    <scope>NUCLEOTIDE SEQUENCE [MRNA] OF 205-362 (CLONE PH-2D-3)</scope>
</reference>
<reference key="6">
    <citation type="journal article" date="1997" name="Proc. Natl. Acad. Sci. U.S.A.">
        <title>The three-dimensional structure of an H-2Ld-peptide complex explains the unique interaction of Ld with beta-2 microglobulin and peptide.</title>
        <authorList>
            <person name="Balendiran G.K."/>
            <person name="Solheim J.C."/>
            <person name="Young A.C."/>
            <person name="Hansen T.H."/>
            <person name="Nathenson S.G."/>
            <person name="Sacchettini J.C."/>
        </authorList>
    </citation>
    <scope>X-RAY CRYSTALLOGRAPHY (2.4 ANGSTROMS) OF 25-293</scope>
</reference>
<organism>
    <name type="scientific">Mus musculus</name>
    <name type="common">Mouse</name>
    <dbReference type="NCBI Taxonomy" id="10090"/>
    <lineage>
        <taxon>Eukaryota</taxon>
        <taxon>Metazoa</taxon>
        <taxon>Chordata</taxon>
        <taxon>Craniata</taxon>
        <taxon>Vertebrata</taxon>
        <taxon>Euteleostomi</taxon>
        <taxon>Mammalia</taxon>
        <taxon>Eutheria</taxon>
        <taxon>Euarchontoglires</taxon>
        <taxon>Glires</taxon>
        <taxon>Rodentia</taxon>
        <taxon>Myomorpha</taxon>
        <taxon>Muroidea</taxon>
        <taxon>Muridae</taxon>
        <taxon>Murinae</taxon>
        <taxon>Mus</taxon>
        <taxon>Mus</taxon>
    </lineage>
</organism>
<name>HA1L_MOUSE</name>